<name>CEC1_DROVI</name>
<accession>Q94557</accession>
<accession>B4M6E1</accession>
<accession>Q94558</accession>
<dbReference type="EMBL" id="U71249">
    <property type="protein sequence ID" value="AAB18322.1"/>
    <property type="molecule type" value="Genomic_DNA"/>
</dbReference>
<dbReference type="EMBL" id="U71249">
    <property type="protein sequence ID" value="AAB18324.1"/>
    <property type="molecule type" value="Genomic_DNA"/>
</dbReference>
<dbReference type="EMBL" id="CH940652">
    <property type="protein sequence ID" value="EDW59217.1"/>
    <property type="molecule type" value="Genomic_DNA"/>
</dbReference>
<dbReference type="EMBL" id="CH940652">
    <property type="protein sequence ID" value="EDW59219.1"/>
    <property type="molecule type" value="Genomic_DNA"/>
</dbReference>
<dbReference type="SMR" id="Q94557"/>
<dbReference type="FunCoup" id="Q94557">
    <property type="interactions" value="84"/>
</dbReference>
<dbReference type="STRING" id="7244.Q94557"/>
<dbReference type="EnsemblMetazoa" id="FBtr0226680">
    <property type="protein sequence ID" value="FBpp0225172"/>
    <property type="gene ID" value="FBgn0017815"/>
</dbReference>
<dbReference type="EnsemblMetazoa" id="XM_002056069.3">
    <property type="protein sequence ID" value="XP_002056105.1"/>
    <property type="gene ID" value="LOC6632628"/>
</dbReference>
<dbReference type="GeneID" id="6632628"/>
<dbReference type="GeneID" id="6632630"/>
<dbReference type="KEGG" id="dvi:6632628"/>
<dbReference type="KEGG" id="dvi:6632630"/>
<dbReference type="eggNOG" id="ENOG502TCNK">
    <property type="taxonomic scope" value="Eukaryota"/>
</dbReference>
<dbReference type="HOGENOM" id="CLU_187909_1_0_1"/>
<dbReference type="InParanoid" id="Q94557"/>
<dbReference type="OMA" id="NRIFVFV"/>
<dbReference type="OrthoDB" id="7410372at2759"/>
<dbReference type="PhylomeDB" id="Q94557"/>
<dbReference type="Proteomes" id="UP000008792">
    <property type="component" value="Unassembled WGS sequence"/>
</dbReference>
<dbReference type="GO" id="GO:0005615">
    <property type="term" value="C:extracellular space"/>
    <property type="evidence" value="ECO:0007669"/>
    <property type="project" value="TreeGrafter"/>
</dbReference>
<dbReference type="GO" id="GO:0019731">
    <property type="term" value="P:antibacterial humoral response"/>
    <property type="evidence" value="ECO:0007669"/>
    <property type="project" value="InterPro"/>
</dbReference>
<dbReference type="GO" id="GO:0050829">
    <property type="term" value="P:defense response to Gram-negative bacterium"/>
    <property type="evidence" value="ECO:0007669"/>
    <property type="project" value="UniProtKB-ARBA"/>
</dbReference>
<dbReference type="GO" id="GO:0050830">
    <property type="term" value="P:defense response to Gram-positive bacterium"/>
    <property type="evidence" value="ECO:0007669"/>
    <property type="project" value="TreeGrafter"/>
</dbReference>
<dbReference type="GO" id="GO:0045087">
    <property type="term" value="P:innate immune response"/>
    <property type="evidence" value="ECO:0007669"/>
    <property type="project" value="UniProtKB-KW"/>
</dbReference>
<dbReference type="InterPro" id="IPR000875">
    <property type="entry name" value="Cecropin"/>
</dbReference>
<dbReference type="InterPro" id="IPR020400">
    <property type="entry name" value="Cecropin_insect"/>
</dbReference>
<dbReference type="PANTHER" id="PTHR38329">
    <property type="entry name" value="CECROPIN-A1-RELATED"/>
    <property type="match status" value="1"/>
</dbReference>
<dbReference type="PANTHER" id="PTHR38329:SF1">
    <property type="entry name" value="CECROPIN-A1-RELATED"/>
    <property type="match status" value="1"/>
</dbReference>
<dbReference type="Pfam" id="PF00272">
    <property type="entry name" value="Cecropin"/>
    <property type="match status" value="1"/>
</dbReference>
<dbReference type="PROSITE" id="PS00268">
    <property type="entry name" value="CECROPIN"/>
    <property type="match status" value="1"/>
</dbReference>
<evidence type="ECO:0000250" key="1"/>
<evidence type="ECO:0000305" key="2"/>
<gene>
    <name type="primary">Cec1</name>
    <name type="ORF">GJ10758</name>
</gene>
<gene>
    <name type="primary">Cec3</name>
    <name type="ORF">GJ10755</name>
</gene>
<reference key="1">
    <citation type="journal article" date="1997" name="J. Mol. Evol.">
        <title>Identification and characterization of the Cecropin antibacterial protein gene locus in Drosophila virilis.</title>
        <authorList>
            <person name="Zhou X."/>
            <person name="Nguyen T."/>
            <person name="Kimbrell D.A."/>
        </authorList>
    </citation>
    <scope>NUCLEOTIDE SEQUENCE [GENOMIC DNA] (CEC1 AND CEC3)</scope>
</reference>
<reference key="2">
    <citation type="journal article" date="2007" name="Nature">
        <title>Evolution of genes and genomes on the Drosophila phylogeny.</title>
        <authorList>
            <consortium name="Drosophila 12 genomes consortium"/>
        </authorList>
    </citation>
    <scope>NUCLEOTIDE SEQUENCE [LARGE SCALE GENOMIC DNA] (CEC1 AND CEC3)</scope>
    <source>
        <strain>Tucson 15010-1051.87</strain>
    </source>
</reference>
<keyword id="KW-0027">Amidation</keyword>
<keyword id="KW-0044">Antibiotic</keyword>
<keyword id="KW-0929">Antimicrobial</keyword>
<keyword id="KW-0391">Immunity</keyword>
<keyword id="KW-0399">Innate immunity</keyword>
<keyword id="KW-1185">Reference proteome</keyword>
<keyword id="KW-0964">Secreted</keyword>
<keyword id="KW-0732">Signal</keyword>
<organism>
    <name type="scientific">Drosophila virilis</name>
    <name type="common">Fruit fly</name>
    <dbReference type="NCBI Taxonomy" id="7244"/>
    <lineage>
        <taxon>Eukaryota</taxon>
        <taxon>Metazoa</taxon>
        <taxon>Ecdysozoa</taxon>
        <taxon>Arthropoda</taxon>
        <taxon>Hexapoda</taxon>
        <taxon>Insecta</taxon>
        <taxon>Pterygota</taxon>
        <taxon>Neoptera</taxon>
        <taxon>Endopterygota</taxon>
        <taxon>Diptera</taxon>
        <taxon>Brachycera</taxon>
        <taxon>Muscomorpha</taxon>
        <taxon>Ephydroidea</taxon>
        <taxon>Drosophilidae</taxon>
        <taxon>Drosophila</taxon>
    </lineage>
</organism>
<comment type="function">
    <text>Cecropins have lytic and antibacterial activity against several Gram-positive and Gram-negative bacteria.</text>
</comment>
<comment type="subcellular location">
    <subcellularLocation>
        <location>Secreted</location>
    </subcellularLocation>
</comment>
<comment type="similarity">
    <text evidence="2">Belongs to the cecropin family.</text>
</comment>
<proteinExistence type="inferred from homology"/>
<sequence>MNFYKVFIFVALILAISLGQSEAGWLKKIGKKIERIGQHTRDATIQGLGIAQQAANVAATARG</sequence>
<protein>
    <recommendedName>
        <fullName>Cecropin-1/3</fullName>
    </recommendedName>
</protein>
<feature type="signal peptide" evidence="1">
    <location>
        <begin position="1"/>
        <end position="23"/>
    </location>
</feature>
<feature type="chain" id="PRO_0000004856" description="Cecropin-1/3">
    <location>
        <begin position="24"/>
        <end position="62"/>
    </location>
</feature>
<feature type="modified residue" description="Arginine amide" evidence="1">
    <location>
        <position position="62"/>
    </location>
</feature>
<feature type="sequence conflict" description="In Ref. 1; AAB18324." evidence="2" ref="1">
    <original>L</original>
    <variation>V</variation>
    <location>
        <position position="48"/>
    </location>
</feature>